<proteinExistence type="inferred from homology"/>
<sequence length="292" mass="31214">MFNRIFLFLLTNLAVLMLAGIVMSLLGVNPAQMSGLLVMAAIFGFGGSFISLLLSKFMAKRSTGAQVITEPRTPTERWLLETVRRQAQAAGIGMPEVAVYEGPEINAFATGANRNNALVAVSTGLLQNMDQDEAEAVLGHEIAHVANGDMVTMALLQGVLNTFVIVLARVVGGIIDSTLSGNREGGRGFAYYIIVFALEMVFGLFATMIAMWFSRRREFRADAGGAQLAGRSKMIAALERLSLNHGQNTLPSQVQAFGISGGVGEGLRRLFLSHPPLTERIAALRAASGSAR</sequence>
<feature type="chain" id="PRO_0000138907" description="Protease HtpX">
    <location>
        <begin position="1"/>
        <end position="292"/>
    </location>
</feature>
<feature type="transmembrane region" description="Helical" evidence="1">
    <location>
        <begin position="5"/>
        <end position="25"/>
    </location>
</feature>
<feature type="transmembrane region" description="Helical" evidence="1">
    <location>
        <begin position="34"/>
        <end position="54"/>
    </location>
</feature>
<feature type="transmembrane region" description="Helical" evidence="1">
    <location>
        <begin position="155"/>
        <end position="175"/>
    </location>
</feature>
<feature type="transmembrane region" description="Helical" evidence="1">
    <location>
        <begin position="193"/>
        <end position="213"/>
    </location>
</feature>
<feature type="active site" evidence="1">
    <location>
        <position position="141"/>
    </location>
</feature>
<feature type="binding site" evidence="1">
    <location>
        <position position="140"/>
    </location>
    <ligand>
        <name>Zn(2+)</name>
        <dbReference type="ChEBI" id="CHEBI:29105"/>
        <note>catalytic</note>
    </ligand>
</feature>
<feature type="binding site" evidence="1">
    <location>
        <position position="144"/>
    </location>
    <ligand>
        <name>Zn(2+)</name>
        <dbReference type="ChEBI" id="CHEBI:29105"/>
        <note>catalytic</note>
    </ligand>
</feature>
<feature type="binding site" evidence="1">
    <location>
        <position position="218"/>
    </location>
    <ligand>
        <name>Zn(2+)</name>
        <dbReference type="ChEBI" id="CHEBI:29105"/>
        <note>catalytic</note>
    </ligand>
</feature>
<protein>
    <recommendedName>
        <fullName evidence="1">Protease HtpX</fullName>
        <ecNumber evidence="1">3.4.24.-</ecNumber>
    </recommendedName>
    <alternativeName>
        <fullName evidence="1">Heat shock protein HtpX</fullName>
    </alternativeName>
</protein>
<name>HTPX_XANAC</name>
<comment type="cofactor">
    <cofactor evidence="1">
        <name>Zn(2+)</name>
        <dbReference type="ChEBI" id="CHEBI:29105"/>
    </cofactor>
    <text evidence="1">Binds 1 zinc ion per subunit.</text>
</comment>
<comment type="subcellular location">
    <subcellularLocation>
        <location evidence="1">Cell inner membrane</location>
        <topology evidence="1">Multi-pass membrane protein</topology>
    </subcellularLocation>
</comment>
<comment type="similarity">
    <text evidence="1">Belongs to the peptidase M48B family.</text>
</comment>
<organism>
    <name type="scientific">Xanthomonas axonopodis pv. citri (strain 306)</name>
    <dbReference type="NCBI Taxonomy" id="190486"/>
    <lineage>
        <taxon>Bacteria</taxon>
        <taxon>Pseudomonadati</taxon>
        <taxon>Pseudomonadota</taxon>
        <taxon>Gammaproteobacteria</taxon>
        <taxon>Lysobacterales</taxon>
        <taxon>Lysobacteraceae</taxon>
        <taxon>Xanthomonas</taxon>
    </lineage>
</organism>
<reference key="1">
    <citation type="journal article" date="2002" name="Nature">
        <title>Comparison of the genomes of two Xanthomonas pathogens with differing host specificities.</title>
        <authorList>
            <person name="da Silva A.C.R."/>
            <person name="Ferro J.A."/>
            <person name="Reinach F.C."/>
            <person name="Farah C.S."/>
            <person name="Furlan L.R."/>
            <person name="Quaggio R.B."/>
            <person name="Monteiro-Vitorello C.B."/>
            <person name="Van Sluys M.A."/>
            <person name="Almeida N.F. Jr."/>
            <person name="Alves L.M.C."/>
            <person name="do Amaral A.M."/>
            <person name="Bertolini M.C."/>
            <person name="Camargo L.E.A."/>
            <person name="Camarotte G."/>
            <person name="Cannavan F."/>
            <person name="Cardozo J."/>
            <person name="Chambergo F."/>
            <person name="Ciapina L.P."/>
            <person name="Cicarelli R.M.B."/>
            <person name="Coutinho L.L."/>
            <person name="Cursino-Santos J.R."/>
            <person name="El-Dorry H."/>
            <person name="Faria J.B."/>
            <person name="Ferreira A.J.S."/>
            <person name="Ferreira R.C.C."/>
            <person name="Ferro M.I.T."/>
            <person name="Formighieri E.F."/>
            <person name="Franco M.C."/>
            <person name="Greggio C.C."/>
            <person name="Gruber A."/>
            <person name="Katsuyama A.M."/>
            <person name="Kishi L.T."/>
            <person name="Leite R.P."/>
            <person name="Lemos E.G.M."/>
            <person name="Lemos M.V.F."/>
            <person name="Locali E.C."/>
            <person name="Machado M.A."/>
            <person name="Madeira A.M.B.N."/>
            <person name="Martinez-Rossi N.M."/>
            <person name="Martins E.C."/>
            <person name="Meidanis J."/>
            <person name="Menck C.F.M."/>
            <person name="Miyaki C.Y."/>
            <person name="Moon D.H."/>
            <person name="Moreira L.M."/>
            <person name="Novo M.T.M."/>
            <person name="Okura V.K."/>
            <person name="Oliveira M.C."/>
            <person name="Oliveira V.R."/>
            <person name="Pereira H.A."/>
            <person name="Rossi A."/>
            <person name="Sena J.A.D."/>
            <person name="Silva C."/>
            <person name="de Souza R.F."/>
            <person name="Spinola L.A.F."/>
            <person name="Takita M.A."/>
            <person name="Tamura R.E."/>
            <person name="Teixeira E.C."/>
            <person name="Tezza R.I.D."/>
            <person name="Trindade dos Santos M."/>
            <person name="Truffi D."/>
            <person name="Tsai S.M."/>
            <person name="White F.F."/>
            <person name="Setubal J.C."/>
            <person name="Kitajima J.P."/>
        </authorList>
    </citation>
    <scope>NUCLEOTIDE SEQUENCE [LARGE SCALE GENOMIC DNA]</scope>
    <source>
        <strain>306</strain>
    </source>
</reference>
<gene>
    <name evidence="1" type="primary">htpX</name>
    <name type="ordered locus">XAC2399</name>
</gene>
<keyword id="KW-0997">Cell inner membrane</keyword>
<keyword id="KW-1003">Cell membrane</keyword>
<keyword id="KW-0378">Hydrolase</keyword>
<keyword id="KW-0472">Membrane</keyword>
<keyword id="KW-0479">Metal-binding</keyword>
<keyword id="KW-0482">Metalloprotease</keyword>
<keyword id="KW-0645">Protease</keyword>
<keyword id="KW-0812">Transmembrane</keyword>
<keyword id="KW-1133">Transmembrane helix</keyword>
<keyword id="KW-0862">Zinc</keyword>
<dbReference type="EC" id="3.4.24.-" evidence="1"/>
<dbReference type="EMBL" id="AE008923">
    <property type="protein sequence ID" value="AAM37251.1"/>
    <property type="molecule type" value="Genomic_DNA"/>
</dbReference>
<dbReference type="RefSeq" id="WP_011051556.1">
    <property type="nucleotide sequence ID" value="NC_003919.1"/>
</dbReference>
<dbReference type="SMR" id="Q8PJX8"/>
<dbReference type="MEROPS" id="M48.002"/>
<dbReference type="GeneID" id="66911512"/>
<dbReference type="KEGG" id="xac:XAC2399"/>
<dbReference type="eggNOG" id="COG0501">
    <property type="taxonomic scope" value="Bacteria"/>
</dbReference>
<dbReference type="HOGENOM" id="CLU_042266_1_0_6"/>
<dbReference type="Proteomes" id="UP000000576">
    <property type="component" value="Chromosome"/>
</dbReference>
<dbReference type="GO" id="GO:0005886">
    <property type="term" value="C:plasma membrane"/>
    <property type="evidence" value="ECO:0007669"/>
    <property type="project" value="UniProtKB-SubCell"/>
</dbReference>
<dbReference type="GO" id="GO:0004222">
    <property type="term" value="F:metalloendopeptidase activity"/>
    <property type="evidence" value="ECO:0007669"/>
    <property type="project" value="UniProtKB-UniRule"/>
</dbReference>
<dbReference type="GO" id="GO:0008270">
    <property type="term" value="F:zinc ion binding"/>
    <property type="evidence" value="ECO:0007669"/>
    <property type="project" value="UniProtKB-UniRule"/>
</dbReference>
<dbReference type="GO" id="GO:0006508">
    <property type="term" value="P:proteolysis"/>
    <property type="evidence" value="ECO:0007669"/>
    <property type="project" value="UniProtKB-KW"/>
</dbReference>
<dbReference type="CDD" id="cd07335">
    <property type="entry name" value="M48B_HtpX_like"/>
    <property type="match status" value="1"/>
</dbReference>
<dbReference type="Gene3D" id="3.30.2010.10">
    <property type="entry name" value="Metalloproteases ('zincins'), catalytic domain"/>
    <property type="match status" value="1"/>
</dbReference>
<dbReference type="HAMAP" id="MF_00188">
    <property type="entry name" value="Pept_M48_protease_HtpX"/>
    <property type="match status" value="1"/>
</dbReference>
<dbReference type="InterPro" id="IPR050083">
    <property type="entry name" value="HtpX_protease"/>
</dbReference>
<dbReference type="InterPro" id="IPR022919">
    <property type="entry name" value="Pept_M48_protease_HtpX"/>
</dbReference>
<dbReference type="InterPro" id="IPR001915">
    <property type="entry name" value="Peptidase_M48"/>
</dbReference>
<dbReference type="NCBIfam" id="NF003965">
    <property type="entry name" value="PRK05457.1"/>
    <property type="match status" value="1"/>
</dbReference>
<dbReference type="PANTHER" id="PTHR43221">
    <property type="entry name" value="PROTEASE HTPX"/>
    <property type="match status" value="1"/>
</dbReference>
<dbReference type="PANTHER" id="PTHR43221:SF1">
    <property type="entry name" value="PROTEASE HTPX"/>
    <property type="match status" value="1"/>
</dbReference>
<dbReference type="Pfam" id="PF01435">
    <property type="entry name" value="Peptidase_M48"/>
    <property type="match status" value="1"/>
</dbReference>
<evidence type="ECO:0000255" key="1">
    <source>
        <dbReference type="HAMAP-Rule" id="MF_00188"/>
    </source>
</evidence>
<accession>Q8PJX8</accession>